<protein>
    <recommendedName>
        <fullName>Nicotinate-nucleotide--dimethylbenzimidazole phosphoribosyltransferase</fullName>
        <shortName>NN:DBI PRT</shortName>
        <ecNumber>2.4.2.21</ecNumber>
    </recommendedName>
    <alternativeName>
        <fullName>N(1)-alpha-phosphoribosyltransferase</fullName>
    </alternativeName>
</protein>
<organism>
    <name type="scientific">Streptomyces coelicolor (strain ATCC BAA-471 / A3(2) / M145)</name>
    <dbReference type="NCBI Taxonomy" id="100226"/>
    <lineage>
        <taxon>Bacteria</taxon>
        <taxon>Bacillati</taxon>
        <taxon>Actinomycetota</taxon>
        <taxon>Actinomycetes</taxon>
        <taxon>Kitasatosporales</taxon>
        <taxon>Streptomycetaceae</taxon>
        <taxon>Streptomyces</taxon>
        <taxon>Streptomyces albidoflavus group</taxon>
    </lineage>
</organism>
<feature type="chain" id="PRO_0000167073" description="Nicotinate-nucleotide--dimethylbenzimidazole phosphoribosyltransferase">
    <location>
        <begin position="1"/>
        <end position="357"/>
    </location>
</feature>
<feature type="active site" description="Proton acceptor" evidence="1">
    <location>
        <position position="323"/>
    </location>
</feature>
<name>COBT_STRCO</name>
<reference key="1">
    <citation type="journal article" date="2002" name="Nature">
        <title>Complete genome sequence of the model actinomycete Streptomyces coelicolor A3(2).</title>
        <authorList>
            <person name="Bentley S.D."/>
            <person name="Chater K.F."/>
            <person name="Cerdeno-Tarraga A.-M."/>
            <person name="Challis G.L."/>
            <person name="Thomson N.R."/>
            <person name="James K.D."/>
            <person name="Harris D.E."/>
            <person name="Quail M.A."/>
            <person name="Kieser H."/>
            <person name="Harper D."/>
            <person name="Bateman A."/>
            <person name="Brown S."/>
            <person name="Chandra G."/>
            <person name="Chen C.W."/>
            <person name="Collins M."/>
            <person name="Cronin A."/>
            <person name="Fraser A."/>
            <person name="Goble A."/>
            <person name="Hidalgo J."/>
            <person name="Hornsby T."/>
            <person name="Howarth S."/>
            <person name="Huang C.-H."/>
            <person name="Kieser T."/>
            <person name="Larke L."/>
            <person name="Murphy L.D."/>
            <person name="Oliver K."/>
            <person name="O'Neil S."/>
            <person name="Rabbinowitsch E."/>
            <person name="Rajandream M.A."/>
            <person name="Rutherford K.M."/>
            <person name="Rutter S."/>
            <person name="Seeger K."/>
            <person name="Saunders D."/>
            <person name="Sharp S."/>
            <person name="Squares R."/>
            <person name="Squares S."/>
            <person name="Taylor K."/>
            <person name="Warren T."/>
            <person name="Wietzorrek A."/>
            <person name="Woodward J.R."/>
            <person name="Barrell B.G."/>
            <person name="Parkhill J."/>
            <person name="Hopwood D.A."/>
        </authorList>
    </citation>
    <scope>NUCLEOTIDE SEQUENCE [LARGE SCALE GENOMIC DNA]</scope>
    <source>
        <strain>ATCC BAA-471 / A3(2) / M145</strain>
    </source>
</reference>
<gene>
    <name type="primary">cobT</name>
    <name type="ordered locus">SCO2175</name>
    <name type="ORF">SC5F7.26</name>
</gene>
<sequence length="357" mass="36951">MSSLNLDDFTDLIERPDGGVRRDAEARRERQVVPPGSLGRLDDLGEWLSAAQSAVPVRPVVRPRVVLFAGDHKVAELGVSARPAGSAGELVREVLEGGRPVSVLARRLDVPVRVVDMALDCDPETLPAEVAGHRVRRGGGRIDIEDALTPEEAEAAFRAGMAVADEEADSGTDLVVLGDVSVGGTTAAGTLVAALCGTDASVVTGRGGLPIDDLAWMRKCAAIRDALRRARPVLGDQLQLLATVGGADLTAMTGFLLQSAVRKVPVILDGVVTAACALVGQRVAFRAPDWWLAAHDSGEPGQAKALDRMAMEPLLTQGVKVGEGAGGLLALPLVQAAASLAAELPTTADGEAVTDGE</sequence>
<proteinExistence type="inferred from homology"/>
<evidence type="ECO:0000250" key="1"/>
<evidence type="ECO:0000305" key="2"/>
<comment type="function">
    <text evidence="1">Catalyzes the synthesis of alpha-ribazole-5'-phosphate from nicotinate mononucleotide (NAMN) and 5,6-dimethylbenzimidazole (DMB).</text>
</comment>
<comment type="catalytic activity">
    <reaction>
        <text>5,6-dimethylbenzimidazole + nicotinate beta-D-ribonucleotide = alpha-ribazole 5'-phosphate + nicotinate + H(+)</text>
        <dbReference type="Rhea" id="RHEA:11196"/>
        <dbReference type="ChEBI" id="CHEBI:15378"/>
        <dbReference type="ChEBI" id="CHEBI:15890"/>
        <dbReference type="ChEBI" id="CHEBI:32544"/>
        <dbReference type="ChEBI" id="CHEBI:57502"/>
        <dbReference type="ChEBI" id="CHEBI:57918"/>
        <dbReference type="EC" id="2.4.2.21"/>
    </reaction>
</comment>
<comment type="pathway">
    <text>Nucleoside biosynthesis; alpha-ribazole biosynthesis; alpha-ribazole from 5,6-dimethylbenzimidazole: step 1/2.</text>
</comment>
<comment type="similarity">
    <text evidence="2">Belongs to the CobT family.</text>
</comment>
<keyword id="KW-0169">Cobalamin biosynthesis</keyword>
<keyword id="KW-0328">Glycosyltransferase</keyword>
<keyword id="KW-1185">Reference proteome</keyword>
<keyword id="KW-0808">Transferase</keyword>
<accession>Q9S2R1</accession>
<dbReference type="EC" id="2.4.2.21"/>
<dbReference type="EMBL" id="AL939111">
    <property type="protein sequence ID" value="CAB51259.1"/>
    <property type="molecule type" value="Genomic_DNA"/>
</dbReference>
<dbReference type="PIR" id="T35291">
    <property type="entry name" value="T35291"/>
</dbReference>
<dbReference type="RefSeq" id="NP_626428.1">
    <property type="nucleotide sequence ID" value="NC_003888.3"/>
</dbReference>
<dbReference type="RefSeq" id="WP_011028178.1">
    <property type="nucleotide sequence ID" value="NZ_VNID01000001.1"/>
</dbReference>
<dbReference type="SMR" id="Q9S2R1"/>
<dbReference type="FunCoup" id="Q9S2R1">
    <property type="interactions" value="114"/>
</dbReference>
<dbReference type="STRING" id="100226.gene:17759772"/>
<dbReference type="PaxDb" id="100226-SCO2175"/>
<dbReference type="GeneID" id="91386832"/>
<dbReference type="KEGG" id="sco:SCO2175"/>
<dbReference type="PATRIC" id="fig|100226.15.peg.2212"/>
<dbReference type="eggNOG" id="COG2038">
    <property type="taxonomic scope" value="Bacteria"/>
</dbReference>
<dbReference type="HOGENOM" id="CLU_002982_0_2_11"/>
<dbReference type="InParanoid" id="Q9S2R1"/>
<dbReference type="OrthoDB" id="9781491at2"/>
<dbReference type="PhylomeDB" id="Q9S2R1"/>
<dbReference type="UniPathway" id="UPA00061">
    <property type="reaction ID" value="UER00516"/>
</dbReference>
<dbReference type="Proteomes" id="UP000001973">
    <property type="component" value="Chromosome"/>
</dbReference>
<dbReference type="GO" id="GO:0008939">
    <property type="term" value="F:nicotinate-nucleotide-dimethylbenzimidazole phosphoribosyltransferase activity"/>
    <property type="evidence" value="ECO:0007669"/>
    <property type="project" value="UniProtKB-UniRule"/>
</dbReference>
<dbReference type="GO" id="GO:0009236">
    <property type="term" value="P:cobalamin biosynthetic process"/>
    <property type="evidence" value="ECO:0007669"/>
    <property type="project" value="UniProtKB-KW"/>
</dbReference>
<dbReference type="CDD" id="cd02439">
    <property type="entry name" value="DMB-PRT_CobT"/>
    <property type="match status" value="1"/>
</dbReference>
<dbReference type="Gene3D" id="1.10.1610.10">
    <property type="match status" value="1"/>
</dbReference>
<dbReference type="Gene3D" id="3.40.50.10210">
    <property type="match status" value="1"/>
</dbReference>
<dbReference type="HAMAP" id="MF_00230">
    <property type="entry name" value="CobT"/>
    <property type="match status" value="1"/>
</dbReference>
<dbReference type="InterPro" id="IPR003200">
    <property type="entry name" value="Nict_dMeBzImd_PRibTrfase"/>
</dbReference>
<dbReference type="InterPro" id="IPR017846">
    <property type="entry name" value="Nict_dMeBzImd_PRibTrfase_bact"/>
</dbReference>
<dbReference type="InterPro" id="IPR023195">
    <property type="entry name" value="Nict_dMeBzImd_PRibTrfase_N"/>
</dbReference>
<dbReference type="InterPro" id="IPR036087">
    <property type="entry name" value="Nict_dMeBzImd_PRibTrfase_sf"/>
</dbReference>
<dbReference type="NCBIfam" id="TIGR03160">
    <property type="entry name" value="cobT_DBIPRT"/>
    <property type="match status" value="1"/>
</dbReference>
<dbReference type="NCBIfam" id="NF000996">
    <property type="entry name" value="PRK00105.1"/>
    <property type="match status" value="1"/>
</dbReference>
<dbReference type="PANTHER" id="PTHR43463">
    <property type="entry name" value="NICOTINATE-NUCLEOTIDE--DIMETHYLBENZIMIDAZOLE PHOSPHORIBOSYLTRANSFERASE"/>
    <property type="match status" value="1"/>
</dbReference>
<dbReference type="PANTHER" id="PTHR43463:SF1">
    <property type="entry name" value="NICOTINATE-NUCLEOTIDE--DIMETHYLBENZIMIDAZOLE PHOSPHORIBOSYLTRANSFERASE"/>
    <property type="match status" value="1"/>
</dbReference>
<dbReference type="Pfam" id="PF02277">
    <property type="entry name" value="DBI_PRT"/>
    <property type="match status" value="1"/>
</dbReference>
<dbReference type="SUPFAM" id="SSF52733">
    <property type="entry name" value="Nicotinate mononucleotide:5,6-dimethylbenzimidazole phosphoribosyltransferase (CobT)"/>
    <property type="match status" value="1"/>
</dbReference>